<keyword id="KW-0067">ATP-binding</keyword>
<keyword id="KW-0997">Cell inner membrane</keyword>
<keyword id="KW-1003">Cell membrane</keyword>
<keyword id="KW-0472">Membrane</keyword>
<keyword id="KW-0547">Nucleotide-binding</keyword>
<keyword id="KW-1278">Translocase</keyword>
<keyword id="KW-0813">Transport</keyword>
<accession>A1TXH7</accession>
<dbReference type="EC" id="7.6.2.11" evidence="1"/>
<dbReference type="EMBL" id="CP000514">
    <property type="protein sequence ID" value="ABM17446.1"/>
    <property type="molecule type" value="Genomic_DNA"/>
</dbReference>
<dbReference type="RefSeq" id="WP_011783894.1">
    <property type="nucleotide sequence ID" value="NC_008740.1"/>
</dbReference>
<dbReference type="SMR" id="A1TXH7"/>
<dbReference type="STRING" id="351348.Maqu_0341"/>
<dbReference type="GeneID" id="31819830"/>
<dbReference type="KEGG" id="maq:Maqu_0341"/>
<dbReference type="eggNOG" id="COG3842">
    <property type="taxonomic scope" value="Bacteria"/>
</dbReference>
<dbReference type="HOGENOM" id="CLU_000604_1_1_6"/>
<dbReference type="OrthoDB" id="9802264at2"/>
<dbReference type="Proteomes" id="UP000000998">
    <property type="component" value="Chromosome"/>
</dbReference>
<dbReference type="GO" id="GO:0043190">
    <property type="term" value="C:ATP-binding cassette (ABC) transporter complex"/>
    <property type="evidence" value="ECO:0007669"/>
    <property type="project" value="InterPro"/>
</dbReference>
<dbReference type="GO" id="GO:0015594">
    <property type="term" value="F:ABC-type putrescine transporter activity"/>
    <property type="evidence" value="ECO:0007669"/>
    <property type="project" value="InterPro"/>
</dbReference>
<dbReference type="GO" id="GO:0005524">
    <property type="term" value="F:ATP binding"/>
    <property type="evidence" value="ECO:0007669"/>
    <property type="project" value="UniProtKB-KW"/>
</dbReference>
<dbReference type="GO" id="GO:0016887">
    <property type="term" value="F:ATP hydrolysis activity"/>
    <property type="evidence" value="ECO:0007669"/>
    <property type="project" value="InterPro"/>
</dbReference>
<dbReference type="CDD" id="cd03300">
    <property type="entry name" value="ABC_PotA_N"/>
    <property type="match status" value="1"/>
</dbReference>
<dbReference type="FunFam" id="3.40.50.300:FF:000133">
    <property type="entry name" value="Spermidine/putrescine import ATP-binding protein PotA"/>
    <property type="match status" value="1"/>
</dbReference>
<dbReference type="Gene3D" id="2.40.50.100">
    <property type="match status" value="1"/>
</dbReference>
<dbReference type="Gene3D" id="3.40.50.300">
    <property type="entry name" value="P-loop containing nucleotide triphosphate hydrolases"/>
    <property type="match status" value="1"/>
</dbReference>
<dbReference type="InterPro" id="IPR003593">
    <property type="entry name" value="AAA+_ATPase"/>
</dbReference>
<dbReference type="InterPro" id="IPR050093">
    <property type="entry name" value="ABC_SmlMolc_Importer"/>
</dbReference>
<dbReference type="InterPro" id="IPR003439">
    <property type="entry name" value="ABC_transporter-like_ATP-bd"/>
</dbReference>
<dbReference type="InterPro" id="IPR017871">
    <property type="entry name" value="ABC_transporter-like_CS"/>
</dbReference>
<dbReference type="InterPro" id="IPR008995">
    <property type="entry name" value="Mo/tungstate-bd_C_term_dom"/>
</dbReference>
<dbReference type="InterPro" id="IPR027417">
    <property type="entry name" value="P-loop_NTPase"/>
</dbReference>
<dbReference type="InterPro" id="IPR005893">
    <property type="entry name" value="PotA-like"/>
</dbReference>
<dbReference type="InterPro" id="IPR017879">
    <property type="entry name" value="PotA_ATP-bd"/>
</dbReference>
<dbReference type="InterPro" id="IPR013611">
    <property type="entry name" value="Transp-assoc_OB_typ2"/>
</dbReference>
<dbReference type="NCBIfam" id="TIGR01187">
    <property type="entry name" value="potA"/>
    <property type="match status" value="1"/>
</dbReference>
<dbReference type="NCBIfam" id="NF006987">
    <property type="entry name" value="PRK09452.1"/>
    <property type="match status" value="1"/>
</dbReference>
<dbReference type="PANTHER" id="PTHR42781">
    <property type="entry name" value="SPERMIDINE/PUTRESCINE IMPORT ATP-BINDING PROTEIN POTA"/>
    <property type="match status" value="1"/>
</dbReference>
<dbReference type="PANTHER" id="PTHR42781:SF4">
    <property type="entry name" value="SPERMIDINE_PUTRESCINE IMPORT ATP-BINDING PROTEIN POTA"/>
    <property type="match status" value="1"/>
</dbReference>
<dbReference type="Pfam" id="PF00005">
    <property type="entry name" value="ABC_tran"/>
    <property type="match status" value="1"/>
</dbReference>
<dbReference type="Pfam" id="PF08402">
    <property type="entry name" value="TOBE_2"/>
    <property type="match status" value="1"/>
</dbReference>
<dbReference type="SMART" id="SM00382">
    <property type="entry name" value="AAA"/>
    <property type="match status" value="1"/>
</dbReference>
<dbReference type="SUPFAM" id="SSF50331">
    <property type="entry name" value="MOP-like"/>
    <property type="match status" value="1"/>
</dbReference>
<dbReference type="SUPFAM" id="SSF52540">
    <property type="entry name" value="P-loop containing nucleoside triphosphate hydrolases"/>
    <property type="match status" value="1"/>
</dbReference>
<dbReference type="PROSITE" id="PS00211">
    <property type="entry name" value="ABC_TRANSPORTER_1"/>
    <property type="match status" value="1"/>
</dbReference>
<dbReference type="PROSITE" id="PS50893">
    <property type="entry name" value="ABC_TRANSPORTER_2"/>
    <property type="match status" value="1"/>
</dbReference>
<dbReference type="PROSITE" id="PS51305">
    <property type="entry name" value="POTA"/>
    <property type="match status" value="1"/>
</dbReference>
<comment type="function">
    <text evidence="1">Part of the ABC transporter complex PotABCD involved in spermidine/putrescine import. Responsible for energy coupling to the transport system.</text>
</comment>
<comment type="catalytic activity">
    <reaction evidence="1">
        <text>ATP + H2O + polyamine-[polyamine-binding protein]Side 1 = ADP + phosphate + polyamineSide 2 + [polyamine-binding protein]Side 1.</text>
        <dbReference type="EC" id="7.6.2.11"/>
    </reaction>
</comment>
<comment type="subunit">
    <text evidence="1">The complex is composed of two ATP-binding proteins (PotA), two transmembrane proteins (PotB and PotC) and a solute-binding protein (PotD).</text>
</comment>
<comment type="subcellular location">
    <subcellularLocation>
        <location evidence="1">Cell inner membrane</location>
        <topology evidence="1">Peripheral membrane protein</topology>
    </subcellularLocation>
</comment>
<comment type="similarity">
    <text evidence="1">Belongs to the ABC transporter superfamily. Spermidine/putrescine importer (TC 3.A.1.11.1) family.</text>
</comment>
<name>POTA_MARN8</name>
<protein>
    <recommendedName>
        <fullName evidence="1">Spermidine/putrescine import ATP-binding protein PotA</fullName>
        <ecNumber evidence="1">7.6.2.11</ecNumber>
    </recommendedName>
</protein>
<evidence type="ECO:0000255" key="1">
    <source>
        <dbReference type="HAMAP-Rule" id="MF_01726"/>
    </source>
</evidence>
<feature type="chain" id="PRO_0000286248" description="Spermidine/putrescine import ATP-binding protein PotA">
    <location>
        <begin position="1"/>
        <end position="373"/>
    </location>
</feature>
<feature type="domain" description="ABC transporter" evidence="1">
    <location>
        <begin position="6"/>
        <end position="236"/>
    </location>
</feature>
<feature type="binding site" evidence="1">
    <location>
        <begin position="38"/>
        <end position="45"/>
    </location>
    <ligand>
        <name>ATP</name>
        <dbReference type="ChEBI" id="CHEBI:30616"/>
    </ligand>
</feature>
<sequence>MKQTLLSLSNLTKQFDGKKVLDSLDLDIFDGEFITLLGPSGCGKTTLLRMMAGFEHPDDGTIALGDQDLTHTPPEHRPLNTVFQNYALFPHMSVFDNVAYGLKMEKRPKQEIRERVEDALAMVQLEDFARRKPHQLSGGQQQRVAIARAVVKRPKVLLLDEPLSALDYKLRRTMQVELKRLQRELGITFVFVTHDQEEALSMSDRVVVLKDGLIQQLGTPREVYERPANLFTARFVGETNFFPGRVDKANGDDTITVDVFGLKRTFRKPDFPVSGGQSLHVLLRPEDIRVLAPDDEDGVAGKIVERNYKGSTLDSVIHLEDGTEVLASEFFDEDDPTFDYRLGEPVKVSWVDGWEWLLPTEPEALPEEEGTDA</sequence>
<organism>
    <name type="scientific">Marinobacter nauticus (strain ATCC 700491 / DSM 11845 / VT8)</name>
    <name type="common">Marinobacter aquaeolei</name>
    <dbReference type="NCBI Taxonomy" id="351348"/>
    <lineage>
        <taxon>Bacteria</taxon>
        <taxon>Pseudomonadati</taxon>
        <taxon>Pseudomonadota</taxon>
        <taxon>Gammaproteobacteria</taxon>
        <taxon>Pseudomonadales</taxon>
        <taxon>Marinobacteraceae</taxon>
        <taxon>Marinobacter</taxon>
    </lineage>
</organism>
<proteinExistence type="inferred from homology"/>
<reference key="1">
    <citation type="journal article" date="2011" name="Appl. Environ. Microbiol.">
        <title>Genomic potential of Marinobacter aquaeolei, a biogeochemical 'opportunitroph'.</title>
        <authorList>
            <person name="Singer E."/>
            <person name="Webb E.A."/>
            <person name="Nelson W.C."/>
            <person name="Heidelberg J.F."/>
            <person name="Ivanova N."/>
            <person name="Pati A."/>
            <person name="Edwards K.J."/>
        </authorList>
    </citation>
    <scope>NUCLEOTIDE SEQUENCE [LARGE SCALE GENOMIC DNA]</scope>
    <source>
        <strain>ATCC 700491 / DSM 11845 / VT8</strain>
    </source>
</reference>
<gene>
    <name evidence="1" type="primary">potA</name>
    <name type="ordered locus">Maqu_0341</name>
</gene>